<accession>B7IFD0</accession>
<organism>
    <name type="scientific">Thermosipho africanus (strain TCF52B)</name>
    <dbReference type="NCBI Taxonomy" id="484019"/>
    <lineage>
        <taxon>Bacteria</taxon>
        <taxon>Thermotogati</taxon>
        <taxon>Thermotogota</taxon>
        <taxon>Thermotogae</taxon>
        <taxon>Thermotogales</taxon>
        <taxon>Fervidobacteriaceae</taxon>
        <taxon>Thermosipho</taxon>
    </lineage>
</organism>
<proteinExistence type="inferred from homology"/>
<sequence length="485" mass="55785">MKVALVSYEVYPFAKVGGLADVVGALPKYLKNFSVEPIVIMPKHKIVEKNAEKFSYSLRKIKESISVPYLKTDEKFDIYQTFIPGTQIPVYLIANDYYFSAEQVYEGPDLAEQAIYFSAAVFEALKVLGEKVDVLHINDWQTGLVPVYLKTLYKDDEFFSKTVVLLTIHNLGYQGIFDSSYMNFSGLPDYLYNIDGIEFYGKINFLKGGILFSDVINTVSPTYAQEIQTKEYGEKLDGVLRLRSSDLYGILNGIDYDEYNPETDKRIYVNYSLQEIEKKYENKKMLQKELNLPQTNDVPVIGMITRLVDQKGLDILSEVLRYILNMDVQFVLLGTGDKKYEEMFKDIEKEFPDKMSANITFDIVLAQKIYASSDMFLMPSRYEPCGLGQMYSLRYGTIPVVRYTGGLADTVMEYDEEAMKGNGFGFKEYDSAYLLKAVARAVDFFKNKKGHWKKLIENAMKTDLSWERSANEYVKIYNKALNKRR</sequence>
<feature type="chain" id="PRO_1000126108" description="Glycogen synthase">
    <location>
        <begin position="1"/>
        <end position="485"/>
    </location>
</feature>
<feature type="binding site" evidence="1">
    <location>
        <position position="15"/>
    </location>
    <ligand>
        <name>ADP-alpha-D-glucose</name>
        <dbReference type="ChEBI" id="CHEBI:57498"/>
    </ligand>
</feature>
<name>GLGA_THEAB</name>
<gene>
    <name evidence="1" type="primary">glgA</name>
    <name type="ordered locus">THA_294</name>
</gene>
<comment type="function">
    <text evidence="1">Synthesizes alpha-1,4-glucan chains using ADP-glucose.</text>
</comment>
<comment type="catalytic activity">
    <reaction evidence="1">
        <text>[(1-&gt;4)-alpha-D-glucosyl](n) + ADP-alpha-D-glucose = [(1-&gt;4)-alpha-D-glucosyl](n+1) + ADP + H(+)</text>
        <dbReference type="Rhea" id="RHEA:18189"/>
        <dbReference type="Rhea" id="RHEA-COMP:9584"/>
        <dbReference type="Rhea" id="RHEA-COMP:9587"/>
        <dbReference type="ChEBI" id="CHEBI:15378"/>
        <dbReference type="ChEBI" id="CHEBI:15444"/>
        <dbReference type="ChEBI" id="CHEBI:57498"/>
        <dbReference type="ChEBI" id="CHEBI:456216"/>
        <dbReference type="EC" id="2.4.1.21"/>
    </reaction>
</comment>
<comment type="pathway">
    <text evidence="1">Glycan biosynthesis; glycogen biosynthesis.</text>
</comment>
<comment type="similarity">
    <text evidence="1">Belongs to the glycosyltransferase 1 family. Bacterial/plant glycogen synthase subfamily.</text>
</comment>
<reference key="1">
    <citation type="journal article" date="2009" name="J. Bacteriol.">
        <title>The genome of Thermosipho africanus TCF52B: lateral genetic connections to the Firmicutes and Archaea.</title>
        <authorList>
            <person name="Nesboe C.L."/>
            <person name="Bapteste E."/>
            <person name="Curtis B."/>
            <person name="Dahle H."/>
            <person name="Lopez P."/>
            <person name="Macleod D."/>
            <person name="Dlutek M."/>
            <person name="Bowman S."/>
            <person name="Zhaxybayeva O."/>
            <person name="Birkeland N.-K."/>
            <person name="Doolittle W.F."/>
        </authorList>
    </citation>
    <scope>NUCLEOTIDE SEQUENCE [LARGE SCALE GENOMIC DNA]</scope>
    <source>
        <strain>TCF52B</strain>
    </source>
</reference>
<evidence type="ECO:0000255" key="1">
    <source>
        <dbReference type="HAMAP-Rule" id="MF_00484"/>
    </source>
</evidence>
<keyword id="KW-0320">Glycogen biosynthesis</keyword>
<keyword id="KW-0328">Glycosyltransferase</keyword>
<keyword id="KW-1185">Reference proteome</keyword>
<keyword id="KW-0808">Transferase</keyword>
<dbReference type="EC" id="2.4.1.21" evidence="1"/>
<dbReference type="EMBL" id="CP001185">
    <property type="protein sequence ID" value="ACJ74794.1"/>
    <property type="molecule type" value="Genomic_DNA"/>
</dbReference>
<dbReference type="RefSeq" id="WP_012579478.1">
    <property type="nucleotide sequence ID" value="NC_011653.1"/>
</dbReference>
<dbReference type="SMR" id="B7IFD0"/>
<dbReference type="STRING" id="484019.THA_294"/>
<dbReference type="CAZy" id="GT5">
    <property type="family name" value="Glycosyltransferase Family 5"/>
</dbReference>
<dbReference type="KEGG" id="taf:THA_294"/>
<dbReference type="eggNOG" id="COG0297">
    <property type="taxonomic scope" value="Bacteria"/>
</dbReference>
<dbReference type="HOGENOM" id="CLU_009583_18_2_0"/>
<dbReference type="OrthoDB" id="9808590at2"/>
<dbReference type="UniPathway" id="UPA00164"/>
<dbReference type="Proteomes" id="UP000002453">
    <property type="component" value="Chromosome"/>
</dbReference>
<dbReference type="GO" id="GO:0009011">
    <property type="term" value="F:alpha-1,4-glucan glucosyltransferase (ADP-glucose donor) activity"/>
    <property type="evidence" value="ECO:0007669"/>
    <property type="project" value="UniProtKB-UniRule"/>
</dbReference>
<dbReference type="GO" id="GO:0004373">
    <property type="term" value="F:alpha-1,4-glucan glucosyltransferase (UDP-glucose donor) activity"/>
    <property type="evidence" value="ECO:0007669"/>
    <property type="project" value="InterPro"/>
</dbReference>
<dbReference type="GO" id="GO:0005978">
    <property type="term" value="P:glycogen biosynthetic process"/>
    <property type="evidence" value="ECO:0007669"/>
    <property type="project" value="UniProtKB-UniRule"/>
</dbReference>
<dbReference type="CDD" id="cd03791">
    <property type="entry name" value="GT5_Glycogen_synthase_DULL1-like"/>
    <property type="match status" value="1"/>
</dbReference>
<dbReference type="Gene3D" id="3.40.50.2000">
    <property type="entry name" value="Glycogen Phosphorylase B"/>
    <property type="match status" value="2"/>
</dbReference>
<dbReference type="HAMAP" id="MF_00484">
    <property type="entry name" value="Glycogen_synth"/>
    <property type="match status" value="1"/>
</dbReference>
<dbReference type="InterPro" id="IPR001296">
    <property type="entry name" value="Glyco_trans_1"/>
</dbReference>
<dbReference type="InterPro" id="IPR011835">
    <property type="entry name" value="GS/SS"/>
</dbReference>
<dbReference type="InterPro" id="IPR013534">
    <property type="entry name" value="Starch_synth_cat_dom"/>
</dbReference>
<dbReference type="NCBIfam" id="TIGR02095">
    <property type="entry name" value="glgA"/>
    <property type="match status" value="1"/>
</dbReference>
<dbReference type="PANTHER" id="PTHR45825:SF11">
    <property type="entry name" value="ALPHA AMYLASE DOMAIN-CONTAINING PROTEIN"/>
    <property type="match status" value="1"/>
</dbReference>
<dbReference type="PANTHER" id="PTHR45825">
    <property type="entry name" value="GRANULE-BOUND STARCH SYNTHASE 1, CHLOROPLASTIC/AMYLOPLASTIC"/>
    <property type="match status" value="1"/>
</dbReference>
<dbReference type="Pfam" id="PF08323">
    <property type="entry name" value="Glyco_transf_5"/>
    <property type="match status" value="1"/>
</dbReference>
<dbReference type="Pfam" id="PF00534">
    <property type="entry name" value="Glycos_transf_1"/>
    <property type="match status" value="1"/>
</dbReference>
<dbReference type="SUPFAM" id="SSF53756">
    <property type="entry name" value="UDP-Glycosyltransferase/glycogen phosphorylase"/>
    <property type="match status" value="1"/>
</dbReference>
<protein>
    <recommendedName>
        <fullName evidence="1">Glycogen synthase</fullName>
        <ecNumber evidence="1">2.4.1.21</ecNumber>
    </recommendedName>
    <alternativeName>
        <fullName evidence="1">Starch [bacterial glycogen] synthase</fullName>
    </alternativeName>
</protein>